<name>RELE2_CAUVC</name>
<protein>
    <recommendedName>
        <fullName>Toxin RelE2</fullName>
    </recommendedName>
</protein>
<proteinExistence type="evidence at protein level"/>
<comment type="function">
    <text evidence="1">Toxic component of a type II toxin-antitoxin (TA) system. Its toxic effect is neutralized by coexpression with cognate antitoxin RelB2 but no other ParD or RelB antitoxin.</text>
</comment>
<comment type="disruption phenotype">
    <text evidence="1">No visible phenotype when deleted singly or as the relBE2 operon.</text>
</comment>
<comment type="similarity">
    <text evidence="2">Belongs to the RelE toxin family.</text>
</comment>
<sequence>MAQVVWTWRALADLTAIRDYIGQFSPLAAQRMALRLKTAADSLAEYPERGRLATATLRELVVVPPYVIRYYVADGLVHIVRIRHAARL</sequence>
<feature type="chain" id="PRO_0000408375" description="Toxin RelE2">
    <location>
        <begin position="1"/>
        <end position="88"/>
    </location>
</feature>
<organism>
    <name type="scientific">Caulobacter vibrioides (strain ATCC 19089 / CIP 103742 / CB 15)</name>
    <name type="common">Caulobacter crescentus</name>
    <dbReference type="NCBI Taxonomy" id="190650"/>
    <lineage>
        <taxon>Bacteria</taxon>
        <taxon>Pseudomonadati</taxon>
        <taxon>Pseudomonadota</taxon>
        <taxon>Alphaproteobacteria</taxon>
        <taxon>Caulobacterales</taxon>
        <taxon>Caulobacteraceae</taxon>
        <taxon>Caulobacter</taxon>
    </lineage>
</organism>
<reference key="1">
    <citation type="journal article" date="2001" name="Proc. Natl. Acad. Sci. U.S.A.">
        <title>Complete genome sequence of Caulobacter crescentus.</title>
        <authorList>
            <person name="Nierman W.C."/>
            <person name="Feldblyum T.V."/>
            <person name="Laub M.T."/>
            <person name="Paulsen I.T."/>
            <person name="Nelson K.E."/>
            <person name="Eisen J.A."/>
            <person name="Heidelberg J.F."/>
            <person name="Alley M.R.K."/>
            <person name="Ohta N."/>
            <person name="Maddock J.R."/>
            <person name="Potocka I."/>
            <person name="Nelson W.C."/>
            <person name="Newton A."/>
            <person name="Stephens C."/>
            <person name="Phadke N.D."/>
            <person name="Ely B."/>
            <person name="DeBoy R.T."/>
            <person name="Dodson R.J."/>
            <person name="Durkin A.S."/>
            <person name="Gwinn M.L."/>
            <person name="Haft D.H."/>
            <person name="Kolonay J.F."/>
            <person name="Smit J."/>
            <person name="Craven M.B."/>
            <person name="Khouri H.M."/>
            <person name="Shetty J."/>
            <person name="Berry K.J."/>
            <person name="Utterback T.R."/>
            <person name="Tran K."/>
            <person name="Wolf A.M."/>
            <person name="Vamathevan J.J."/>
            <person name="Ermolaeva M.D."/>
            <person name="White O."/>
            <person name="Salzberg S.L."/>
            <person name="Venter J.C."/>
            <person name="Shapiro L."/>
            <person name="Fraser C.M."/>
        </authorList>
    </citation>
    <scope>NUCLEOTIDE SEQUENCE [LARGE SCALE GENOMIC DNA]</scope>
    <source>
        <strain>ATCC 19089 / CIP 103742 / CB 15</strain>
    </source>
</reference>
<reference key="2">
    <citation type="journal article" date="2005" name="Nucleic Acids Res.">
        <title>Toxin-antitoxin loci are highly abundant in free-living but lost from host-associated prokaryotes.</title>
        <authorList>
            <person name="Pandey D.P."/>
            <person name="Gerdes K."/>
        </authorList>
    </citation>
    <scope>POSSIBLE FUNCTION</scope>
    <source>
        <strain>ATCC 19089 / CIP 103742 / CB 15</strain>
    </source>
</reference>
<reference key="3">
    <citation type="journal article" date="2010" name="Mol. Microbiol.">
        <title>Interaction specificity, toxicity and regulation of a paralogous set of ParE/RelE-family toxin-antitoxin systems.</title>
        <authorList>
            <person name="Fiebig A."/>
            <person name="Castro Rojas C.M."/>
            <person name="Siegal-Gaskins D."/>
            <person name="Crosson S."/>
        </authorList>
    </citation>
    <scope>FUNCTION AS A TOXIN</scope>
    <scope>DISRUPTION PHENOTYPE</scope>
    <source>
        <strain>ATCC 19089 / CIP 103742 / CB 15</strain>
    </source>
</reference>
<evidence type="ECO:0000269" key="1">
    <source>
    </source>
</evidence>
<evidence type="ECO:0000305" key="2"/>
<gene>
    <name type="primary">relE2</name>
    <name type="ordered locus">CC_2513</name>
</gene>
<keyword id="KW-1185">Reference proteome</keyword>
<keyword id="KW-1277">Toxin-antitoxin system</keyword>
<dbReference type="EMBL" id="AE005673">
    <property type="protein sequence ID" value="AAK24484.1"/>
    <property type="molecule type" value="Genomic_DNA"/>
</dbReference>
<dbReference type="PIR" id="H87560">
    <property type="entry name" value="H87560"/>
</dbReference>
<dbReference type="RefSeq" id="NP_421316.1">
    <property type="nucleotide sequence ID" value="NC_002696.2"/>
</dbReference>
<dbReference type="SMR" id="Q9A5D7"/>
<dbReference type="STRING" id="190650.CC_2513"/>
<dbReference type="EnsemblBacteria" id="AAK24484">
    <property type="protein sequence ID" value="AAK24484"/>
    <property type="gene ID" value="CC_2513"/>
</dbReference>
<dbReference type="KEGG" id="ccr:CC_2513"/>
<dbReference type="eggNOG" id="COG3668">
    <property type="taxonomic scope" value="Bacteria"/>
</dbReference>
<dbReference type="HOGENOM" id="CLU_147162_11_0_5"/>
<dbReference type="BioCyc" id="CAULO:CC2513-MONOMER"/>
<dbReference type="Proteomes" id="UP000001816">
    <property type="component" value="Chromosome"/>
</dbReference>
<dbReference type="Gene3D" id="3.30.2310.20">
    <property type="entry name" value="RelE-like"/>
    <property type="match status" value="1"/>
</dbReference>
<dbReference type="InterPro" id="IPR007712">
    <property type="entry name" value="RelE/ParE_toxin"/>
</dbReference>
<dbReference type="InterPro" id="IPR035093">
    <property type="entry name" value="RelE/ParE_toxin_dom_sf"/>
</dbReference>
<dbReference type="InterPro" id="IPR051803">
    <property type="entry name" value="TA_system_RelE-like_toxin"/>
</dbReference>
<dbReference type="NCBIfam" id="TIGR02385">
    <property type="entry name" value="RelE_StbE"/>
    <property type="match status" value="1"/>
</dbReference>
<dbReference type="PANTHER" id="PTHR33755">
    <property type="entry name" value="TOXIN PARE1-RELATED"/>
    <property type="match status" value="1"/>
</dbReference>
<dbReference type="Pfam" id="PF05016">
    <property type="entry name" value="ParE_toxin"/>
    <property type="match status" value="1"/>
</dbReference>
<accession>Q9A5D7</accession>